<evidence type="ECO:0000255" key="1"/>
<evidence type="ECO:0000255" key="2">
    <source>
        <dbReference type="PROSITE-ProRule" id="PRU00089"/>
    </source>
</evidence>
<evidence type="ECO:0000256" key="3">
    <source>
        <dbReference type="SAM" id="MobiDB-lite"/>
    </source>
</evidence>
<evidence type="ECO:0000269" key="4">
    <source>
    </source>
</evidence>
<evidence type="ECO:0000269" key="5">
    <source>
    </source>
</evidence>
<evidence type="ECO:0000269" key="6">
    <source>
    </source>
</evidence>
<evidence type="ECO:0000305" key="7"/>
<evidence type="ECO:0000312" key="8">
    <source>
        <dbReference type="EMBL" id="AAH78036.1"/>
    </source>
</evidence>
<evidence type="ECO:0000312" key="9">
    <source>
        <dbReference type="EMBL" id="CAA52365.1"/>
    </source>
</evidence>
<reference evidence="7 9" key="1">
    <citation type="journal article" date="1994" name="Mech. Dev.">
        <title>Spatial and temporal transcription patterns of the forkhead related XFD-2/XFD-2' genes in Xenopus laevis embryos.</title>
        <authorList>
            <person name="Lef J."/>
            <person name="Clement J.H."/>
            <person name="Oschwald R."/>
            <person name="Koester M."/>
            <person name="Knoechel W."/>
        </authorList>
    </citation>
    <scope>NUCLEOTIDE SEQUENCE [MRNA]</scope>
    <scope>TISSUE SPECIFICITY</scope>
    <scope>DEVELOPMENTAL STAGE</scope>
    <source>
        <tissue evidence="6">Gastrula</tissue>
    </source>
</reference>
<reference evidence="8" key="2">
    <citation type="submission" date="2004-07" db="EMBL/GenBank/DDBJ databases">
        <authorList>
            <consortium name="NIH - Xenopus Gene Collection (XGC) project"/>
        </authorList>
    </citation>
    <scope>NUCLEOTIDE SEQUENCE [LARGE SCALE MRNA]</scope>
    <source>
        <tissue evidence="8">Embryo</tissue>
    </source>
</reference>
<reference evidence="7" key="3">
    <citation type="journal article" date="1992" name="Mech. Dev.">
        <title>Activin A induced expression of a fork head related gene in posterior chordamesoderm (notochord) of Xenopus laevis embryos.</title>
        <authorList>
            <person name="Knoechel S."/>
            <person name="Lef J."/>
            <person name="Clement J.H."/>
            <person name="Klocke B."/>
            <person name="Hille S."/>
            <person name="Koester M."/>
            <person name="Knoechel W."/>
        </authorList>
    </citation>
    <scope>NUCLEOTIDE SEQUENCE [MRNA] OF 119-214</scope>
    <source>
        <tissue evidence="4">Gastrula</tissue>
    </source>
</reference>
<reference evidence="7" key="4">
    <citation type="journal article" date="1994" name="Nucleic Acids Res.">
        <title>Novel HOX, POU and FKH genes expressed during bFGF-induced mesodermal differentiation in Xenopus.</title>
        <authorList>
            <person name="King M.W."/>
            <person name="Moore M.J."/>
        </authorList>
    </citation>
    <scope>IDENTIFICATION</scope>
</reference>
<reference evidence="7" key="5">
    <citation type="journal article" date="2005" name="Development">
        <title>An essential role of Xenopus Foxi1a for ventral specification of the cephalic ectoderm during gastrulation.</title>
        <authorList>
            <person name="Matsuo-Takasaki M."/>
            <person name="Matsumura M."/>
            <person name="Sasai Y."/>
        </authorList>
    </citation>
    <scope>FUNCTION</scope>
    <scope>TISSUE SPECIFICITY</scope>
    <scope>DEVELOPMENTAL STAGE</scope>
    <scope>INDUCTION</scope>
</reference>
<reference evidence="7" key="6">
    <citation type="journal article" date="2005" name="Gene">
        <title>Of fox and frogs: fox (fork head/winged helix) transcription factors in Xenopus development.</title>
        <authorList>
            <person name="Pohl B.S."/>
            <person name="Knoechel W."/>
        </authorList>
    </citation>
    <scope>REVIEW</scope>
</reference>
<feature type="chain" id="PRO_0000258002" description="Forkhead box protein I1-B">
    <location>
        <begin position="1"/>
        <end position="367"/>
    </location>
</feature>
<feature type="DNA-binding region" description="Fork-head" evidence="2">
    <location>
        <begin position="128"/>
        <end position="222"/>
    </location>
</feature>
<feature type="region of interest" description="Disordered" evidence="3">
    <location>
        <begin position="1"/>
        <end position="21"/>
    </location>
</feature>
<feature type="region of interest" description="Disordered" evidence="3">
    <location>
        <begin position="213"/>
        <end position="274"/>
    </location>
</feature>
<feature type="compositionally biased region" description="Basic and acidic residues" evidence="3">
    <location>
        <begin position="233"/>
        <end position="246"/>
    </location>
</feature>
<feature type="compositionally biased region" description="Polar residues" evidence="3">
    <location>
        <begin position="252"/>
        <end position="274"/>
    </location>
</feature>
<feature type="sequence conflict" description="In Ref. 2; AAH78036." evidence="7" ref="2">
    <original>P</original>
    <variation>S</variation>
    <location>
        <position position="3"/>
    </location>
</feature>
<feature type="sequence conflict" description="In Ref. 2; AAH78036." evidence="7" ref="2">
    <original>L</original>
    <variation>F</variation>
    <location>
        <position position="33"/>
    </location>
</feature>
<feature type="sequence conflict" description="In Ref. 2; AAH78036." evidence="7" ref="2">
    <original>P</original>
    <variation>H</variation>
    <location>
        <position position="47"/>
    </location>
</feature>
<feature type="sequence conflict" description="In Ref. 2; AAH78036." evidence="7" ref="2">
    <original>H</original>
    <variation>Q</variation>
    <location>
        <position position="99"/>
    </location>
</feature>
<feature type="sequence conflict" description="In Ref. 3; no nucleotide entry." evidence="7" ref="3">
    <original>G</original>
    <variation>D</variation>
    <location>
        <position position="171"/>
    </location>
</feature>
<feature type="sequence conflict" description="In Ref. 3; no nucleotide entry." evidence="7" ref="3">
    <original>N</original>
    <variation>RN</variation>
    <location>
        <position position="214"/>
    </location>
</feature>
<protein>
    <recommendedName>
        <fullName>Forkhead box protein I1-B</fullName>
        <shortName>FoxI1-B</shortName>
        <shortName>FoxI1b</shortName>
        <shortName>xFoxI1b</shortName>
    </recommendedName>
    <alternativeName>
        <fullName>Fork head domain-related protein 2'</fullName>
        <shortName>xFD-2'</shortName>
        <shortName>xFD2'</shortName>
    </alternativeName>
</protein>
<comment type="function">
    <text evidence="5">Transcription factor. Essential for ventral specification of the early cephalic (head) ectoderm during gastrulation, playing a role in the 'non-neural' versus 'neural' cell fate choice. Binds to DNA via the target sequence 5'-[AG]TAAA[CT]A-3', with 5'-ATAAACA-3' being the preferred binding site.</text>
</comment>
<comment type="subcellular location">
    <subcellularLocation>
        <location evidence="1 7">Nucleus</location>
    </subcellularLocation>
</comment>
<comment type="tissue specificity">
    <text evidence="5 6">Initially localized to the animal hemisphere (the presumptive ectoderm) of early-mid blastula embryos. Becomes restricted to head placodes, excluding the otic placodes, by the tailbud stages.</text>
</comment>
<comment type="developmental stage">
    <text evidence="5 6">Expression begins at the early-mid blastula stage. Levels are highest in the blastula and gastrula stages, after which levels decrease until the somite segregation stages. Expression persists to later developmental stages at a slightly higher extent than that of foxi1-A.</text>
</comment>
<comment type="induction">
    <text evidence="5">Induced by Bmp-signaling. Suppressed by Wnt-signaling.</text>
</comment>
<comment type="sequence caution" evidence="7">
    <conflict type="erroneous initiation">
        <sequence resource="EMBL-CDS" id="AAH78036"/>
    </conflict>
</comment>
<organism>
    <name type="scientific">Xenopus laevis</name>
    <name type="common">African clawed frog</name>
    <dbReference type="NCBI Taxonomy" id="8355"/>
    <lineage>
        <taxon>Eukaryota</taxon>
        <taxon>Metazoa</taxon>
        <taxon>Chordata</taxon>
        <taxon>Craniata</taxon>
        <taxon>Vertebrata</taxon>
        <taxon>Euteleostomi</taxon>
        <taxon>Amphibia</taxon>
        <taxon>Batrachia</taxon>
        <taxon>Anura</taxon>
        <taxon>Pipoidea</taxon>
        <taxon>Pipidae</taxon>
        <taxon>Xenopodinae</taxon>
        <taxon>Xenopus</taxon>
        <taxon>Xenopus</taxon>
    </lineage>
</organism>
<accession>Q91905</accession>
<accession>Q6DCJ0</accession>
<keyword id="KW-0217">Developmental protein</keyword>
<keyword id="KW-0221">Differentiation</keyword>
<keyword id="KW-0238">DNA-binding</keyword>
<keyword id="KW-0524">Neurogenesis</keyword>
<keyword id="KW-0539">Nucleus</keyword>
<keyword id="KW-1185">Reference proteome</keyword>
<keyword id="KW-0804">Transcription</keyword>
<keyword id="KW-0805">Transcription regulation</keyword>
<dbReference type="EMBL" id="X74316">
    <property type="protein sequence ID" value="CAA52365.1"/>
    <property type="molecule type" value="mRNA"/>
</dbReference>
<dbReference type="EMBL" id="BC078036">
    <property type="protein sequence ID" value="AAH78036.1"/>
    <property type="status" value="ALT_INIT"/>
    <property type="molecule type" value="mRNA"/>
</dbReference>
<dbReference type="PIR" id="C56556">
    <property type="entry name" value="C56556"/>
</dbReference>
<dbReference type="PIR" id="S49009">
    <property type="entry name" value="S49009"/>
</dbReference>
<dbReference type="SMR" id="Q91905"/>
<dbReference type="KEGG" id="xla:397955"/>
<dbReference type="AGR" id="Xenbase:XB-GENE-6252155"/>
<dbReference type="CTD" id="397955"/>
<dbReference type="Xenbase" id="XB-GENE-6252155">
    <property type="gene designation" value="foxi3.2.L"/>
</dbReference>
<dbReference type="OrthoDB" id="5402974at2759"/>
<dbReference type="Proteomes" id="UP000186698">
    <property type="component" value="Chromosome 1L"/>
</dbReference>
<dbReference type="Bgee" id="397955">
    <property type="expression patterns" value="Expressed in gastrula and 3 other cell types or tissues"/>
</dbReference>
<dbReference type="GO" id="GO:0005634">
    <property type="term" value="C:nucleus"/>
    <property type="evidence" value="ECO:0000250"/>
    <property type="project" value="UniProtKB"/>
</dbReference>
<dbReference type="GO" id="GO:0003677">
    <property type="term" value="F:DNA binding"/>
    <property type="evidence" value="ECO:0000303"/>
    <property type="project" value="UniProtKB"/>
</dbReference>
<dbReference type="GO" id="GO:0000981">
    <property type="term" value="F:DNA-binding transcription factor activity, RNA polymerase II-specific"/>
    <property type="evidence" value="ECO:0000318"/>
    <property type="project" value="GO_Central"/>
</dbReference>
<dbReference type="GO" id="GO:0000978">
    <property type="term" value="F:RNA polymerase II cis-regulatory region sequence-specific DNA binding"/>
    <property type="evidence" value="ECO:0000318"/>
    <property type="project" value="GO_Central"/>
</dbReference>
<dbReference type="GO" id="GO:0043565">
    <property type="term" value="F:sequence-specific DNA binding"/>
    <property type="evidence" value="ECO:0000250"/>
    <property type="project" value="UniProtKB"/>
</dbReference>
<dbReference type="GO" id="GO:0009653">
    <property type="term" value="P:anatomical structure morphogenesis"/>
    <property type="evidence" value="ECO:0000318"/>
    <property type="project" value="GO_Central"/>
</dbReference>
<dbReference type="GO" id="GO:0030154">
    <property type="term" value="P:cell differentiation"/>
    <property type="evidence" value="ECO:0000318"/>
    <property type="project" value="GO_Central"/>
</dbReference>
<dbReference type="GO" id="GO:0048264">
    <property type="term" value="P:determination of ventral identity"/>
    <property type="evidence" value="ECO:0000315"/>
    <property type="project" value="UniProtKB"/>
</dbReference>
<dbReference type="GO" id="GO:0007398">
    <property type="term" value="P:ectoderm development"/>
    <property type="evidence" value="ECO:0000315"/>
    <property type="project" value="UniProtKB"/>
</dbReference>
<dbReference type="GO" id="GO:0007399">
    <property type="term" value="P:nervous system development"/>
    <property type="evidence" value="ECO:0007669"/>
    <property type="project" value="UniProtKB-KW"/>
</dbReference>
<dbReference type="GO" id="GO:0045893">
    <property type="term" value="P:positive regulation of DNA-templated transcription"/>
    <property type="evidence" value="ECO:0000250"/>
    <property type="project" value="UniProtKB"/>
</dbReference>
<dbReference type="GO" id="GO:0006357">
    <property type="term" value="P:regulation of transcription by RNA polymerase II"/>
    <property type="evidence" value="ECO:0000318"/>
    <property type="project" value="GO_Central"/>
</dbReference>
<dbReference type="FunFam" id="1.10.10.10:FF:000016">
    <property type="entry name" value="Forkhead box protein I1"/>
    <property type="match status" value="1"/>
</dbReference>
<dbReference type="Gene3D" id="1.10.10.10">
    <property type="entry name" value="Winged helix-like DNA-binding domain superfamily/Winged helix DNA-binding domain"/>
    <property type="match status" value="1"/>
</dbReference>
<dbReference type="InterPro" id="IPR001766">
    <property type="entry name" value="Fork_head_dom"/>
</dbReference>
<dbReference type="InterPro" id="IPR050211">
    <property type="entry name" value="FOX_domain-containing"/>
</dbReference>
<dbReference type="InterPro" id="IPR018122">
    <property type="entry name" value="TF_fork_head_CS_1"/>
</dbReference>
<dbReference type="InterPro" id="IPR030456">
    <property type="entry name" value="TF_fork_head_CS_2"/>
</dbReference>
<dbReference type="InterPro" id="IPR036388">
    <property type="entry name" value="WH-like_DNA-bd_sf"/>
</dbReference>
<dbReference type="InterPro" id="IPR036390">
    <property type="entry name" value="WH_DNA-bd_sf"/>
</dbReference>
<dbReference type="PANTHER" id="PTHR11829">
    <property type="entry name" value="FORKHEAD BOX PROTEIN"/>
    <property type="match status" value="1"/>
</dbReference>
<dbReference type="PANTHER" id="PTHR11829:SF408">
    <property type="entry name" value="FORKHEAD BOX PROTEIN I1"/>
    <property type="match status" value="1"/>
</dbReference>
<dbReference type="Pfam" id="PF00250">
    <property type="entry name" value="Forkhead"/>
    <property type="match status" value="1"/>
</dbReference>
<dbReference type="PRINTS" id="PR00053">
    <property type="entry name" value="FORKHEAD"/>
</dbReference>
<dbReference type="SMART" id="SM00339">
    <property type="entry name" value="FH"/>
    <property type="match status" value="1"/>
</dbReference>
<dbReference type="SUPFAM" id="SSF46785">
    <property type="entry name" value="Winged helix' DNA-binding domain"/>
    <property type="match status" value="1"/>
</dbReference>
<dbReference type="PROSITE" id="PS00657">
    <property type="entry name" value="FORK_HEAD_1"/>
    <property type="match status" value="1"/>
</dbReference>
<dbReference type="PROSITE" id="PS00658">
    <property type="entry name" value="FORK_HEAD_2"/>
    <property type="match status" value="1"/>
</dbReference>
<dbReference type="PROSITE" id="PS50039">
    <property type="entry name" value="FORK_HEAD_3"/>
    <property type="match status" value="1"/>
</dbReference>
<proteinExistence type="evidence at transcript level"/>
<gene>
    <name type="primary">foxi1-b</name>
</gene>
<name>FXI1B_XENLA</name>
<sequence length="367" mass="40971">MNPVQQPAQHRSPASLLHLPHPKRAQEAPDMGLYCDNFMFSQQNLHPSQRAPNFSIGGEFTPPANPYLWLGGPGMNNAPNYSPAPAPYIPSAFSAPQRHFMANSAAFGGADLGWMSAASQEELLKMVRPPYSYSALIAMAIQNASDKRLTLSQIYQYVAENFPFYKKSKAGWQNSIRHNLSLNDCFKKMPRDENDPGKGNYWTLDSNCEKMFDNGNFRRKRKPKSESNNAKIAKRDEDHLNPKGKESPPMITPSSSPEVLSPTGHSKSPSPPTVTYTPCLTNFIGSMTAVDSATMNRQSPLGLLNELSQRNITGLSSFISGSAVDQSSEHQDNSLFYNRSPYYTNQKQPHFLQQLHPQQPPLYQGRY</sequence>